<dbReference type="EC" id="6.1.1.19"/>
<dbReference type="EMBL" id="AJ248285">
    <property type="protein sequence ID" value="CAB49601.1"/>
    <property type="molecule type" value="Genomic_DNA"/>
</dbReference>
<dbReference type="EMBL" id="HE613800">
    <property type="protein sequence ID" value="CCE70077.1"/>
    <property type="molecule type" value="Genomic_DNA"/>
</dbReference>
<dbReference type="PIR" id="H75110">
    <property type="entry name" value="H75110"/>
</dbReference>
<dbReference type="RefSeq" id="WP_010867806.1">
    <property type="nucleotide sequence ID" value="NC_000868.1"/>
</dbReference>
<dbReference type="SMR" id="Q9V0V2"/>
<dbReference type="STRING" id="272844.PAB0469"/>
<dbReference type="KEGG" id="pab:PAB0469"/>
<dbReference type="PATRIC" id="fig|272844.11.peg.722"/>
<dbReference type="eggNOG" id="arCOG00487">
    <property type="taxonomic scope" value="Archaea"/>
</dbReference>
<dbReference type="HOGENOM" id="CLU_006406_6_1_2"/>
<dbReference type="OrthoDB" id="372102at2157"/>
<dbReference type="PhylomeDB" id="Q9V0V2"/>
<dbReference type="Proteomes" id="UP000000810">
    <property type="component" value="Chromosome"/>
</dbReference>
<dbReference type="Proteomes" id="UP000009139">
    <property type="component" value="Chromosome"/>
</dbReference>
<dbReference type="GO" id="GO:0005737">
    <property type="term" value="C:cytoplasm"/>
    <property type="evidence" value="ECO:0007669"/>
    <property type="project" value="UniProtKB-SubCell"/>
</dbReference>
<dbReference type="GO" id="GO:0004814">
    <property type="term" value="F:arginine-tRNA ligase activity"/>
    <property type="evidence" value="ECO:0007669"/>
    <property type="project" value="UniProtKB-UniRule"/>
</dbReference>
<dbReference type="GO" id="GO:0005524">
    <property type="term" value="F:ATP binding"/>
    <property type="evidence" value="ECO:0007669"/>
    <property type="project" value="UniProtKB-UniRule"/>
</dbReference>
<dbReference type="GO" id="GO:0006420">
    <property type="term" value="P:arginyl-tRNA aminoacylation"/>
    <property type="evidence" value="ECO:0007669"/>
    <property type="project" value="UniProtKB-UniRule"/>
</dbReference>
<dbReference type="CDD" id="cd07956">
    <property type="entry name" value="Anticodon_Ia_Arg"/>
    <property type="match status" value="1"/>
</dbReference>
<dbReference type="CDD" id="cd00671">
    <property type="entry name" value="ArgRS_core"/>
    <property type="match status" value="1"/>
</dbReference>
<dbReference type="FunFam" id="1.10.730.10:FF:000008">
    <property type="entry name" value="Arginine--tRNA ligase"/>
    <property type="match status" value="1"/>
</dbReference>
<dbReference type="FunFam" id="3.30.1360.70:FF:000008">
    <property type="entry name" value="Arginine--tRNA ligase"/>
    <property type="match status" value="1"/>
</dbReference>
<dbReference type="FunFam" id="3.40.50.620:FF:000190">
    <property type="entry name" value="Arginine--tRNA ligase"/>
    <property type="match status" value="1"/>
</dbReference>
<dbReference type="Gene3D" id="3.30.1360.70">
    <property type="entry name" value="Arginyl tRNA synthetase N-terminal domain"/>
    <property type="match status" value="1"/>
</dbReference>
<dbReference type="Gene3D" id="3.40.50.620">
    <property type="entry name" value="HUPs"/>
    <property type="match status" value="1"/>
</dbReference>
<dbReference type="Gene3D" id="1.10.730.10">
    <property type="entry name" value="Isoleucyl-tRNA Synthetase, Domain 1"/>
    <property type="match status" value="1"/>
</dbReference>
<dbReference type="HAMAP" id="MF_00123">
    <property type="entry name" value="Arg_tRNA_synth"/>
    <property type="match status" value="1"/>
</dbReference>
<dbReference type="InterPro" id="IPR001412">
    <property type="entry name" value="aa-tRNA-synth_I_CS"/>
</dbReference>
<dbReference type="InterPro" id="IPR001278">
    <property type="entry name" value="Arg-tRNA-ligase"/>
</dbReference>
<dbReference type="InterPro" id="IPR005148">
    <property type="entry name" value="Arg-tRNA-synth_N"/>
</dbReference>
<dbReference type="InterPro" id="IPR036695">
    <property type="entry name" value="Arg-tRNA-synth_N_sf"/>
</dbReference>
<dbReference type="InterPro" id="IPR035684">
    <property type="entry name" value="ArgRS_core"/>
</dbReference>
<dbReference type="InterPro" id="IPR008909">
    <property type="entry name" value="DALR_anticod-bd"/>
</dbReference>
<dbReference type="InterPro" id="IPR014729">
    <property type="entry name" value="Rossmann-like_a/b/a_fold"/>
</dbReference>
<dbReference type="InterPro" id="IPR009080">
    <property type="entry name" value="tRNAsynth_Ia_anticodon-bd"/>
</dbReference>
<dbReference type="NCBIfam" id="NF002447">
    <property type="entry name" value="PRK01611.3-4"/>
    <property type="match status" value="1"/>
</dbReference>
<dbReference type="PANTHER" id="PTHR11956:SF5">
    <property type="entry name" value="ARGININE--TRNA LIGASE, CYTOPLASMIC"/>
    <property type="match status" value="1"/>
</dbReference>
<dbReference type="PANTHER" id="PTHR11956">
    <property type="entry name" value="ARGINYL-TRNA SYNTHETASE"/>
    <property type="match status" value="1"/>
</dbReference>
<dbReference type="Pfam" id="PF03485">
    <property type="entry name" value="Arg_tRNA_synt_N"/>
    <property type="match status" value="1"/>
</dbReference>
<dbReference type="Pfam" id="PF05746">
    <property type="entry name" value="DALR_1"/>
    <property type="match status" value="1"/>
</dbReference>
<dbReference type="Pfam" id="PF00750">
    <property type="entry name" value="tRNA-synt_1d"/>
    <property type="match status" value="2"/>
</dbReference>
<dbReference type="PRINTS" id="PR01038">
    <property type="entry name" value="TRNASYNTHARG"/>
</dbReference>
<dbReference type="SMART" id="SM01016">
    <property type="entry name" value="Arg_tRNA_synt_N"/>
    <property type="match status" value="1"/>
</dbReference>
<dbReference type="SMART" id="SM00836">
    <property type="entry name" value="DALR_1"/>
    <property type="match status" value="1"/>
</dbReference>
<dbReference type="SUPFAM" id="SSF47323">
    <property type="entry name" value="Anticodon-binding domain of a subclass of class I aminoacyl-tRNA synthetases"/>
    <property type="match status" value="1"/>
</dbReference>
<dbReference type="SUPFAM" id="SSF55190">
    <property type="entry name" value="Arginyl-tRNA synthetase (ArgRS), N-terminal 'additional' domain"/>
    <property type="match status" value="1"/>
</dbReference>
<dbReference type="SUPFAM" id="SSF52374">
    <property type="entry name" value="Nucleotidylyl transferase"/>
    <property type="match status" value="1"/>
</dbReference>
<dbReference type="PROSITE" id="PS00178">
    <property type="entry name" value="AA_TRNA_LIGASE_I"/>
    <property type="match status" value="1"/>
</dbReference>
<gene>
    <name type="primary">argS</name>
    <name type="ordered locus">PYRAB06880</name>
    <name type="ORF">PAB0469</name>
</gene>
<accession>Q9V0V2</accession>
<accession>G8ZJF0</accession>
<proteinExistence type="inferred from homology"/>
<keyword id="KW-0030">Aminoacyl-tRNA synthetase</keyword>
<keyword id="KW-0067">ATP-binding</keyword>
<keyword id="KW-0963">Cytoplasm</keyword>
<keyword id="KW-0436">Ligase</keyword>
<keyword id="KW-0547">Nucleotide-binding</keyword>
<keyword id="KW-0648">Protein biosynthesis</keyword>
<reference key="1">
    <citation type="journal article" date="2003" name="Mol. Microbiol.">
        <title>An integrated analysis of the genome of the hyperthermophilic archaeon Pyrococcus abyssi.</title>
        <authorList>
            <person name="Cohen G.N."/>
            <person name="Barbe V."/>
            <person name="Flament D."/>
            <person name="Galperin M."/>
            <person name="Heilig R."/>
            <person name="Lecompte O."/>
            <person name="Poch O."/>
            <person name="Prieur D."/>
            <person name="Querellou J."/>
            <person name="Ripp R."/>
            <person name="Thierry J.-C."/>
            <person name="Van der Oost J."/>
            <person name="Weissenbach J."/>
            <person name="Zivanovic Y."/>
            <person name="Forterre P."/>
        </authorList>
    </citation>
    <scope>NUCLEOTIDE SEQUENCE [LARGE SCALE GENOMIC DNA]</scope>
    <source>
        <strain>GE5 / Orsay</strain>
    </source>
</reference>
<reference key="2">
    <citation type="journal article" date="2012" name="Curr. Microbiol.">
        <title>Re-annotation of two hyperthermophilic archaea Pyrococcus abyssi GE5 and Pyrococcus furiosus DSM 3638.</title>
        <authorList>
            <person name="Gao J."/>
            <person name="Wang J."/>
        </authorList>
    </citation>
    <scope>GENOME REANNOTATION</scope>
    <source>
        <strain>GE5 / Orsay</strain>
    </source>
</reference>
<comment type="catalytic activity">
    <reaction>
        <text>tRNA(Arg) + L-arginine + ATP = L-arginyl-tRNA(Arg) + AMP + diphosphate</text>
        <dbReference type="Rhea" id="RHEA:20301"/>
        <dbReference type="Rhea" id="RHEA-COMP:9658"/>
        <dbReference type="Rhea" id="RHEA-COMP:9673"/>
        <dbReference type="ChEBI" id="CHEBI:30616"/>
        <dbReference type="ChEBI" id="CHEBI:32682"/>
        <dbReference type="ChEBI" id="CHEBI:33019"/>
        <dbReference type="ChEBI" id="CHEBI:78442"/>
        <dbReference type="ChEBI" id="CHEBI:78513"/>
        <dbReference type="ChEBI" id="CHEBI:456215"/>
        <dbReference type="EC" id="6.1.1.19"/>
    </reaction>
</comment>
<comment type="subcellular location">
    <subcellularLocation>
        <location evidence="1">Cytoplasm</location>
    </subcellularLocation>
</comment>
<comment type="similarity">
    <text evidence="2">Belongs to the class-I aminoacyl-tRNA synthetase family.</text>
</comment>
<sequence>MLSRVKEGAREKIIKVIESLAPGWKGEIEFKDTPSPELGDFGTPVAFKLARVMKKPPFQIAELIVEELKKELPEGIREVRAINGYVNFFVDYGYLARQLIVEVLEKGDRFGSSDIGRGKKVIVEHTSVNPTKPLHMGHARNAILGDSMARILRFLGYEVEVQNYIDDLGIQFAQVYWGYLKLREKFEKIMKELKEKGIKEDPIDHVLGLLYVEVNRVLEENPEIEAEIRDIMKKLESGELNGRELAESVVRAQMVTTYRLGIKYDLLVWESDIVSRKLFEIAVKLLERNENFYTPNEGKYKGAFVMDLSKLFPDMKNPYLVLRRSDGTATYTGKDIAYHLWKFGKIDVDLLYKPWDEHTWTTAPDGESVKGKFGGADIVINVIGAEQRHPQMAIKHALKLLGFEDAAENLHHLAYEHVERPEGKFSGRKGTWVGFTVDEVINEAIKRARELIEEKSPGLSDEEKEEIAEKVGVGAIRYNMVKYSPDKKIIFRWEDVLNFEGESAPYIQYAHARCSSILRKAGNPEWEALLKEANFKELTERERELIILLSKFPEVVEQAGRDVKPHLIAWYANELASLFNKFYMDHPVIKAEKGIREARLLLVMAVRQVLRNSLWLLGIEAPDRM</sequence>
<protein>
    <recommendedName>
        <fullName>Arginine--tRNA ligase</fullName>
        <ecNumber>6.1.1.19</ecNumber>
    </recommendedName>
    <alternativeName>
        <fullName>Arginyl-tRNA synthetase</fullName>
        <shortName>ArgRS</shortName>
    </alternativeName>
</protein>
<feature type="chain" id="PRO_0000151650" description="Arginine--tRNA ligase">
    <location>
        <begin position="1"/>
        <end position="625"/>
    </location>
</feature>
<feature type="short sequence motif" description="'HIGH' region">
    <location>
        <begin position="128"/>
        <end position="138"/>
    </location>
</feature>
<evidence type="ECO:0000250" key="1"/>
<evidence type="ECO:0000305" key="2"/>
<organism>
    <name type="scientific">Pyrococcus abyssi (strain GE5 / Orsay)</name>
    <dbReference type="NCBI Taxonomy" id="272844"/>
    <lineage>
        <taxon>Archaea</taxon>
        <taxon>Methanobacteriati</taxon>
        <taxon>Methanobacteriota</taxon>
        <taxon>Thermococci</taxon>
        <taxon>Thermococcales</taxon>
        <taxon>Thermococcaceae</taxon>
        <taxon>Pyrococcus</taxon>
    </lineage>
</organism>
<name>SYR_PYRAB</name>